<proteinExistence type="inferred from homology"/>
<feature type="chain" id="PRO_0000260636" description="1,4-alpha-glucan branching enzyme GlgB">
    <location>
        <begin position="1"/>
        <end position="764"/>
    </location>
</feature>
<feature type="active site" description="Nucleophile" evidence="1">
    <location>
        <position position="434"/>
    </location>
</feature>
<feature type="active site" description="Proton donor" evidence="1">
    <location>
        <position position="487"/>
    </location>
</feature>
<comment type="function">
    <text evidence="1">Catalyzes the formation of the alpha-1,6-glucosidic linkages in glycogen by scission of a 1,4-alpha-linked oligosaccharide from growing alpha-1,4-glucan chains and the subsequent attachment of the oligosaccharide to the alpha-1,6 position.</text>
</comment>
<comment type="catalytic activity">
    <reaction evidence="1">
        <text>Transfers a segment of a (1-&gt;4)-alpha-D-glucan chain to a primary hydroxy group in a similar glucan chain.</text>
        <dbReference type="EC" id="2.4.1.18"/>
    </reaction>
</comment>
<comment type="pathway">
    <text evidence="1">Glycan biosynthesis; glycogen biosynthesis.</text>
</comment>
<comment type="subunit">
    <text evidence="1">Monomer.</text>
</comment>
<comment type="similarity">
    <text evidence="1">Belongs to the glycosyl hydrolase 13 family. GlgB subfamily.</text>
</comment>
<sequence>MPMTTIAPEQVNRIVWNQHHDPFEILGSHPIEQNGKNVWVVRAYLPNASAAWVVLPEQRQEYAMQTVHDPHFFECIIETSELSNYQLKTKEGEHERVSYDPYAFRSPRLTDFDLHLFAEGNHHRIYEKLGAHFTEVDGVTGVYFAVWAPNARNVSVLGDFNLWDGRKHQMRKGATGVWELFIPEIGVGEHYKYEIKNFAGHIYEKSDPFGFQQEPRPKTASIVSNLNSYNWSDENWLEQRRHTDPLTQPISVYEVHLGSWLHAASAEPAKLPNGETEPVVIASELNPGARFLTYRELASRLIPYVKELGYTHIELLPIAEHPFDGSWGYQVTGYYAPTSRFGTPEDFMYFVDQCHQNNIGVIVDWVPGHFPKDGHGLAFFDGTHLYEHADSRKGEHKEWGTLVFNYSRNEVRNFLVANALFWFDKYHIDGIRVDAVASMLYLDYCRKEGEWLPNQYGGRENLEAADFLRQVNHLLFSYFPGVLSIAEESTDWPMVSWPTYTGGLGFNLKWNMGWMHDMLDYFSMDPWFRQFHQNNVTFSMWYNHSENFMLALSHDEVVHGKSNIIGKMPGDKWQKLANVRCLFAYMFAHPGKKTMFMSMEFGQWSEWNVWADLEWPLLQFEPHQQLKKFFTELNKLYRSEPALYTLDFAREGFDWIDCSDNRHSVVSFIRREKDTENFVVVVCNFTPQPHSHYRIGVPEKGFYTELFNSDARQYGGSNMGNLGGKWTDDWSMHSRPYSLDLCLPPLGVLILKMDKEKTAKASGS</sequence>
<reference key="1">
    <citation type="journal article" date="2014" name="Stand. Genomic Sci.">
        <title>Complete genome sequence of Anabaena variabilis ATCC 29413.</title>
        <authorList>
            <person name="Thiel T."/>
            <person name="Pratte B.S."/>
            <person name="Zhong J."/>
            <person name="Goodwin L."/>
            <person name="Copeland A."/>
            <person name="Lucas S."/>
            <person name="Han C."/>
            <person name="Pitluck S."/>
            <person name="Land M.L."/>
            <person name="Kyrpides N.C."/>
            <person name="Woyke T."/>
        </authorList>
    </citation>
    <scope>NUCLEOTIDE SEQUENCE [LARGE SCALE GENOMIC DNA]</scope>
    <source>
        <strain>ATCC 29413 / PCC 7937</strain>
    </source>
</reference>
<protein>
    <recommendedName>
        <fullName evidence="1">1,4-alpha-glucan branching enzyme GlgB</fullName>
        <ecNumber evidence="1">2.4.1.18</ecNumber>
    </recommendedName>
    <alternativeName>
        <fullName evidence="1">1,4-alpha-D-glucan:1,4-alpha-D-glucan 6-glucosyl-transferase</fullName>
    </alternativeName>
    <alternativeName>
        <fullName evidence="1">Alpha-(1-&gt;4)-glucan branching enzyme</fullName>
    </alternativeName>
    <alternativeName>
        <fullName evidence="1">Glycogen branching enzyme</fullName>
        <shortName evidence="1">BE</shortName>
    </alternativeName>
</protein>
<gene>
    <name evidence="1" type="primary">glgB</name>
    <name type="ordered locus">Ava_4616</name>
</gene>
<keyword id="KW-0119">Carbohydrate metabolism</keyword>
<keyword id="KW-0320">Glycogen biosynthesis</keyword>
<keyword id="KW-0321">Glycogen metabolism</keyword>
<keyword id="KW-0328">Glycosyltransferase</keyword>
<keyword id="KW-0808">Transferase</keyword>
<evidence type="ECO:0000255" key="1">
    <source>
        <dbReference type="HAMAP-Rule" id="MF_00685"/>
    </source>
</evidence>
<dbReference type="EC" id="2.4.1.18" evidence="1"/>
<dbReference type="EMBL" id="CP000117">
    <property type="protein sequence ID" value="ABA24213.1"/>
    <property type="molecule type" value="Genomic_DNA"/>
</dbReference>
<dbReference type="SMR" id="Q3M473"/>
<dbReference type="STRING" id="240292.Ava_4616"/>
<dbReference type="CAZy" id="CBM48">
    <property type="family name" value="Carbohydrate-Binding Module Family 48"/>
</dbReference>
<dbReference type="CAZy" id="GH13">
    <property type="family name" value="Glycoside Hydrolase Family 13"/>
</dbReference>
<dbReference type="KEGG" id="ava:Ava_4616"/>
<dbReference type="eggNOG" id="COG0296">
    <property type="taxonomic scope" value="Bacteria"/>
</dbReference>
<dbReference type="HOGENOM" id="CLU_004245_3_2_3"/>
<dbReference type="UniPathway" id="UPA00164"/>
<dbReference type="Proteomes" id="UP000002533">
    <property type="component" value="Chromosome"/>
</dbReference>
<dbReference type="GO" id="GO:0005829">
    <property type="term" value="C:cytosol"/>
    <property type="evidence" value="ECO:0007669"/>
    <property type="project" value="TreeGrafter"/>
</dbReference>
<dbReference type="GO" id="GO:0003844">
    <property type="term" value="F:1,4-alpha-glucan branching enzyme activity"/>
    <property type="evidence" value="ECO:0007669"/>
    <property type="project" value="UniProtKB-UniRule"/>
</dbReference>
<dbReference type="GO" id="GO:0043169">
    <property type="term" value="F:cation binding"/>
    <property type="evidence" value="ECO:0007669"/>
    <property type="project" value="InterPro"/>
</dbReference>
<dbReference type="GO" id="GO:0004553">
    <property type="term" value="F:hydrolase activity, hydrolyzing O-glycosyl compounds"/>
    <property type="evidence" value="ECO:0007669"/>
    <property type="project" value="InterPro"/>
</dbReference>
<dbReference type="GO" id="GO:0005978">
    <property type="term" value="P:glycogen biosynthetic process"/>
    <property type="evidence" value="ECO:0007669"/>
    <property type="project" value="UniProtKB-UniRule"/>
</dbReference>
<dbReference type="CDD" id="cd11322">
    <property type="entry name" value="AmyAc_Glg_BE"/>
    <property type="match status" value="1"/>
</dbReference>
<dbReference type="CDD" id="cd02855">
    <property type="entry name" value="E_set_GBE_prok_N"/>
    <property type="match status" value="1"/>
</dbReference>
<dbReference type="FunFam" id="2.60.40.10:FF:000169">
    <property type="entry name" value="1,4-alpha-glucan branching enzyme GlgB"/>
    <property type="match status" value="1"/>
</dbReference>
<dbReference type="FunFam" id="2.60.40.1180:FF:000002">
    <property type="entry name" value="1,4-alpha-glucan branching enzyme GlgB"/>
    <property type="match status" value="1"/>
</dbReference>
<dbReference type="FunFam" id="3.20.20.80:FF:000003">
    <property type="entry name" value="1,4-alpha-glucan branching enzyme GlgB"/>
    <property type="match status" value="1"/>
</dbReference>
<dbReference type="Gene3D" id="3.20.20.80">
    <property type="entry name" value="Glycosidases"/>
    <property type="match status" value="1"/>
</dbReference>
<dbReference type="Gene3D" id="2.60.40.1180">
    <property type="entry name" value="Golgi alpha-mannosidase II"/>
    <property type="match status" value="1"/>
</dbReference>
<dbReference type="Gene3D" id="2.60.40.10">
    <property type="entry name" value="Immunoglobulins"/>
    <property type="match status" value="2"/>
</dbReference>
<dbReference type="HAMAP" id="MF_00685">
    <property type="entry name" value="GlgB"/>
    <property type="match status" value="1"/>
</dbReference>
<dbReference type="InterPro" id="IPR006048">
    <property type="entry name" value="A-amylase/branching_C"/>
</dbReference>
<dbReference type="InterPro" id="IPR037439">
    <property type="entry name" value="Branching_enzy"/>
</dbReference>
<dbReference type="InterPro" id="IPR006407">
    <property type="entry name" value="GlgB"/>
</dbReference>
<dbReference type="InterPro" id="IPR054169">
    <property type="entry name" value="GlgB_N"/>
</dbReference>
<dbReference type="InterPro" id="IPR044143">
    <property type="entry name" value="GlgB_N_E_set_prok"/>
</dbReference>
<dbReference type="InterPro" id="IPR006047">
    <property type="entry name" value="Glyco_hydro_13_cat_dom"/>
</dbReference>
<dbReference type="InterPro" id="IPR004193">
    <property type="entry name" value="Glyco_hydro_13_N"/>
</dbReference>
<dbReference type="InterPro" id="IPR013780">
    <property type="entry name" value="Glyco_hydro_b"/>
</dbReference>
<dbReference type="InterPro" id="IPR017853">
    <property type="entry name" value="Glycoside_hydrolase_SF"/>
</dbReference>
<dbReference type="InterPro" id="IPR013783">
    <property type="entry name" value="Ig-like_fold"/>
</dbReference>
<dbReference type="InterPro" id="IPR014756">
    <property type="entry name" value="Ig_E-set"/>
</dbReference>
<dbReference type="NCBIfam" id="TIGR01515">
    <property type="entry name" value="branching_enzym"/>
    <property type="match status" value="1"/>
</dbReference>
<dbReference type="NCBIfam" id="NF003811">
    <property type="entry name" value="PRK05402.1"/>
    <property type="match status" value="1"/>
</dbReference>
<dbReference type="NCBIfam" id="NF008967">
    <property type="entry name" value="PRK12313.1"/>
    <property type="match status" value="1"/>
</dbReference>
<dbReference type="PANTHER" id="PTHR43651">
    <property type="entry name" value="1,4-ALPHA-GLUCAN-BRANCHING ENZYME"/>
    <property type="match status" value="1"/>
</dbReference>
<dbReference type="PANTHER" id="PTHR43651:SF3">
    <property type="entry name" value="1,4-ALPHA-GLUCAN-BRANCHING ENZYME"/>
    <property type="match status" value="1"/>
</dbReference>
<dbReference type="Pfam" id="PF00128">
    <property type="entry name" value="Alpha-amylase"/>
    <property type="match status" value="2"/>
</dbReference>
<dbReference type="Pfam" id="PF02806">
    <property type="entry name" value="Alpha-amylase_C"/>
    <property type="match status" value="1"/>
</dbReference>
<dbReference type="Pfam" id="PF02922">
    <property type="entry name" value="CBM_48"/>
    <property type="match status" value="1"/>
</dbReference>
<dbReference type="Pfam" id="PF22019">
    <property type="entry name" value="GlgB_N"/>
    <property type="match status" value="1"/>
</dbReference>
<dbReference type="PIRSF" id="PIRSF000463">
    <property type="entry name" value="GlgB"/>
    <property type="match status" value="1"/>
</dbReference>
<dbReference type="SMART" id="SM00642">
    <property type="entry name" value="Aamy"/>
    <property type="match status" value="1"/>
</dbReference>
<dbReference type="SUPFAM" id="SSF51445">
    <property type="entry name" value="(Trans)glycosidases"/>
    <property type="match status" value="1"/>
</dbReference>
<dbReference type="SUPFAM" id="SSF81296">
    <property type="entry name" value="E set domains"/>
    <property type="match status" value="2"/>
</dbReference>
<dbReference type="SUPFAM" id="SSF51011">
    <property type="entry name" value="Glycosyl hydrolase domain"/>
    <property type="match status" value="1"/>
</dbReference>
<organism>
    <name type="scientific">Trichormus variabilis (strain ATCC 29413 / PCC 7937)</name>
    <name type="common">Anabaena variabilis</name>
    <dbReference type="NCBI Taxonomy" id="240292"/>
    <lineage>
        <taxon>Bacteria</taxon>
        <taxon>Bacillati</taxon>
        <taxon>Cyanobacteriota</taxon>
        <taxon>Cyanophyceae</taxon>
        <taxon>Nostocales</taxon>
        <taxon>Nostocaceae</taxon>
        <taxon>Trichormus</taxon>
    </lineage>
</organism>
<accession>Q3M473</accession>
<name>GLGB_TRIV2</name>